<accession>Q97CP1</accession>
<organism>
    <name type="scientific">Thermoplasma volcanium (strain ATCC 51530 / DSM 4299 / JCM 9571 / NBRC 15438 / GSS1)</name>
    <dbReference type="NCBI Taxonomy" id="273116"/>
    <lineage>
        <taxon>Archaea</taxon>
        <taxon>Methanobacteriati</taxon>
        <taxon>Thermoplasmatota</taxon>
        <taxon>Thermoplasmata</taxon>
        <taxon>Thermoplasmatales</taxon>
        <taxon>Thermoplasmataceae</taxon>
        <taxon>Thermoplasma</taxon>
    </lineage>
</organism>
<protein>
    <recommendedName>
        <fullName evidence="1 4">8-oxoguanine DNA glycosylase/AP lyase</fullName>
    </recommendedName>
    <domain>
        <recommendedName>
            <fullName evidence="1 3">8-oxoguanine DNA glycosylase</fullName>
            <shortName evidence="1">8-oxoG DNA glycosylase</shortName>
            <ecNumber evidence="1 2">3.2.2.-</ecNumber>
        </recommendedName>
    </domain>
    <domain>
        <recommendedName>
            <fullName evidence="1">DNA-(apurinic or apyrimidinic site) lyase</fullName>
            <shortName evidence="1 3">AP lyase</shortName>
            <ecNumber evidence="1 2">4.2.99.18</ecNumber>
        </recommendedName>
    </domain>
</protein>
<feature type="chain" id="PRO_0000159569" description="8-oxoguanine DNA glycosylase/AP lyase">
    <location>
        <begin position="1"/>
        <end position="204"/>
    </location>
</feature>
<feature type="active site" evidence="1">
    <location>
        <position position="129"/>
    </location>
</feature>
<feature type="active site" evidence="1">
    <location>
        <position position="147"/>
    </location>
</feature>
<feature type="site" description="Important for guanine/8-oxoguanine distinction" evidence="1">
    <location>
        <position position="204"/>
    </location>
</feature>
<gene>
    <name evidence="1" type="primary">ogg</name>
    <name type="ordered locus">TV0060</name>
    <name type="ORF">TVG0063493</name>
</gene>
<keyword id="KW-0227">DNA damage</keyword>
<keyword id="KW-0234">DNA repair</keyword>
<keyword id="KW-0326">Glycosidase</keyword>
<keyword id="KW-0378">Hydrolase</keyword>
<keyword id="KW-0456">Lyase</keyword>
<keyword id="KW-0511">Multifunctional enzyme</keyword>
<reference key="1">
    <citation type="journal article" date="2000" name="Proc. Natl. Acad. Sci. U.S.A.">
        <title>Archaeal adaptation to higher temperatures revealed by genomic sequence of Thermoplasma volcanium.</title>
        <authorList>
            <person name="Kawashima T."/>
            <person name="Amano N."/>
            <person name="Koike H."/>
            <person name="Makino S."/>
            <person name="Higuchi S."/>
            <person name="Kawashima-Ohya Y."/>
            <person name="Watanabe K."/>
            <person name="Yamazaki M."/>
            <person name="Kanehori K."/>
            <person name="Kawamoto T."/>
            <person name="Nunoshiba T."/>
            <person name="Yamamoto Y."/>
            <person name="Aramaki H."/>
            <person name="Makino K."/>
            <person name="Suzuki M."/>
        </authorList>
    </citation>
    <scope>NUCLEOTIDE SEQUENCE [LARGE SCALE GENOMIC DNA]</scope>
    <source>
        <strain>ATCC 51530 / DSM 4299 / JCM 9571 / NBRC 15438 / GSS1</strain>
    </source>
</reference>
<reference key="2">
    <citation type="journal article" date="2016" name="Archaea">
        <title>Characterization of a thermostable 8-oxoguanine DNA glycosylase specific for GO/N mismatches from the thermoacidophilic archaeon Thermoplasma volcanium.</title>
        <authorList>
            <person name="Fujii M."/>
            <person name="Hata C."/>
            <person name="Ukita M."/>
            <person name="Fukushima C."/>
            <person name="Matsuura C."/>
            <person name="Kawashima-Ohya Y."/>
            <person name="Tomobe K."/>
            <person name="Kawashima T."/>
        </authorList>
    </citation>
    <scope>FUNCTION</scope>
    <scope>CATALYTIC ACTIVITY</scope>
    <scope>BIOPHYSICOCHEMICAL PROPERTIES</scope>
    <source>
        <strain>ATCC 51530 / DSM 4299 / JCM 9571 / NBRC 15438 / GSS1</strain>
    </source>
</reference>
<dbReference type="EC" id="3.2.2.-" evidence="1 2"/>
<dbReference type="EC" id="4.2.99.18" evidence="1 2"/>
<dbReference type="EMBL" id="BA000011">
    <property type="protein sequence ID" value="BAB59202.1"/>
    <property type="molecule type" value="Genomic_DNA"/>
</dbReference>
<dbReference type="RefSeq" id="WP_010916318.1">
    <property type="nucleotide sequence ID" value="NC_002689.2"/>
</dbReference>
<dbReference type="SMR" id="Q97CP1"/>
<dbReference type="PaxDb" id="273116-14324274"/>
<dbReference type="GeneID" id="1441548"/>
<dbReference type="KEGG" id="tvo:TVG0063493"/>
<dbReference type="eggNOG" id="arCOG04357">
    <property type="taxonomic scope" value="Archaea"/>
</dbReference>
<dbReference type="HOGENOM" id="CLU_104937_0_0_2"/>
<dbReference type="OrthoDB" id="35941at2157"/>
<dbReference type="PhylomeDB" id="Q97CP1"/>
<dbReference type="Proteomes" id="UP000001017">
    <property type="component" value="Chromosome"/>
</dbReference>
<dbReference type="GO" id="GO:0140078">
    <property type="term" value="F:class I DNA-(apurinic or apyrimidinic site) endonuclease activity"/>
    <property type="evidence" value="ECO:0007669"/>
    <property type="project" value="UniProtKB-EC"/>
</dbReference>
<dbReference type="GO" id="GO:0016799">
    <property type="term" value="F:hydrolase activity, hydrolyzing N-glycosyl compounds"/>
    <property type="evidence" value="ECO:0007669"/>
    <property type="project" value="UniProtKB-UniRule"/>
</dbReference>
<dbReference type="GO" id="GO:0006284">
    <property type="term" value="P:base-excision repair"/>
    <property type="evidence" value="ECO:0007669"/>
    <property type="project" value="UniProtKB-UniRule"/>
</dbReference>
<dbReference type="CDD" id="cd00056">
    <property type="entry name" value="ENDO3c"/>
    <property type="match status" value="1"/>
</dbReference>
<dbReference type="Gene3D" id="1.10.1670.10">
    <property type="entry name" value="Helix-hairpin-Helix base-excision DNA repair enzymes (C-terminal)"/>
    <property type="match status" value="1"/>
</dbReference>
<dbReference type="Gene3D" id="1.10.340.30">
    <property type="entry name" value="Hypothetical protein, domain 2"/>
    <property type="match status" value="1"/>
</dbReference>
<dbReference type="HAMAP" id="MF_00241">
    <property type="entry name" value="Ogg"/>
    <property type="match status" value="1"/>
</dbReference>
<dbReference type="InterPro" id="IPR012092">
    <property type="entry name" value="DNA_glyclase/AP_lyase_Ogg"/>
</dbReference>
<dbReference type="InterPro" id="IPR011257">
    <property type="entry name" value="DNA_glycosylase"/>
</dbReference>
<dbReference type="InterPro" id="IPR003265">
    <property type="entry name" value="HhH-GPD_domain"/>
</dbReference>
<dbReference type="InterPro" id="IPR023170">
    <property type="entry name" value="HhH_base_excis_C"/>
</dbReference>
<dbReference type="NCBIfam" id="NF002305">
    <property type="entry name" value="PRK01229.1"/>
    <property type="match status" value="1"/>
</dbReference>
<dbReference type="Pfam" id="PF22175">
    <property type="entry name" value="Ogg-HhH"/>
    <property type="match status" value="1"/>
</dbReference>
<dbReference type="PIRSF" id="PIRSF005954">
    <property type="entry name" value="Thrmst_ogg"/>
    <property type="match status" value="1"/>
</dbReference>
<dbReference type="SMART" id="SM00478">
    <property type="entry name" value="ENDO3c"/>
    <property type="match status" value="1"/>
</dbReference>
<dbReference type="SUPFAM" id="SSF48150">
    <property type="entry name" value="DNA-glycosylase"/>
    <property type="match status" value="1"/>
</dbReference>
<evidence type="ECO:0000255" key="1">
    <source>
        <dbReference type="HAMAP-Rule" id="MF_00241"/>
    </source>
</evidence>
<evidence type="ECO:0000269" key="2">
    <source>
    </source>
</evidence>
<evidence type="ECO:0000303" key="3">
    <source>
    </source>
</evidence>
<evidence type="ECO:0000305" key="4"/>
<comment type="function">
    <text evidence="2">Catalyzes the excision of an oxidatively damaged form of guanine (7,8-dihydro-8-oxoguanine = 8-oxoG) from DNA. Also cleaves the DNA backbone at apurinic/apyrimidinic sites (AP sites). Prefers oligomers containing 8-oxoG:C, 8-oxoG:T and 8-oxoG:G base pairs, and is less effective on oligomers containing 8-oxoG:A mispairs.</text>
</comment>
<comment type="catalytic activity">
    <reaction evidence="1 2">
        <text>2'-deoxyribonucleotide-(2'-deoxyribose 5'-phosphate)-2'-deoxyribonucleotide-DNA = a 3'-end 2'-deoxyribonucleotide-(2,3-dehydro-2,3-deoxyribose 5'-phosphate)-DNA + a 5'-end 5'-phospho-2'-deoxyribonucleoside-DNA + H(+)</text>
        <dbReference type="Rhea" id="RHEA:66592"/>
        <dbReference type="Rhea" id="RHEA-COMP:13180"/>
        <dbReference type="Rhea" id="RHEA-COMP:16897"/>
        <dbReference type="Rhea" id="RHEA-COMP:17067"/>
        <dbReference type="ChEBI" id="CHEBI:15378"/>
        <dbReference type="ChEBI" id="CHEBI:136412"/>
        <dbReference type="ChEBI" id="CHEBI:157695"/>
        <dbReference type="ChEBI" id="CHEBI:167181"/>
        <dbReference type="EC" id="4.2.99.18"/>
    </reaction>
</comment>
<comment type="biophysicochemical properties">
    <phDependence>
        <text evidence="2">Optimum pH is about 7.5.</text>
    </phDependence>
    <temperatureDependence>
        <text evidence="2">Optimum temperature is 60 degrees Celsius.</text>
    </temperatureDependence>
</comment>
<comment type="similarity">
    <text evidence="1">Belongs to the type-2 OGG1 family.</text>
</comment>
<proteinExistence type="evidence at protein level"/>
<name>OGG1_THEVO</name>
<sequence length="204" mass="24267">MDFNQYFLPLFQGEASLIINKKVEEFKLFDRKNKDALFEELCFCILAANTSARMALDMQNRIGKGFLYLSENELREKLKAFKYRFYNVRPRYIVESRDIVDELPYIVSMDNKEEARDLLVENVYGFGYKEASHFLRNVGVFDFAILDKHILEWLSRYFQVKKNTSRKNYLYNESIFREIAKSVGMEPGVLDLYIWYMETGTVIK</sequence>